<sequence length="513" mass="55235">MQLNSTEISELIKQRIAQFNVVSEAHNEGTIVSVSDGVIRIHGLADCMQGEMISLPGNRYAIALNLERDSVGAVVMGPYADLAEGMKVKCTGRILEVPVGRGLLGRVVNTLGAPIDGKGPLDHDGFSAVEAIAPGVIERQSVDQPVQTGYKAVDSMIPIGRGQRELIIGDRQTGKTALAIDAIINQRDSGIKCIYVAIGQKASTISNVVRKLEEHGALANTIVVVATASESAALQYLAPYAGCAMGEYFRDRGEDALIIYDDLSKQAVAYRQISLLLRRPPGREAFPGDVFYLHSRLLERAARVNAEYVEAFTKGEVKGKNGSLTALPIIETQAGDVSAFVPTNVISITDGQIFLETNLFNAGIRPAVNPGISVSRVGGAAQTKIMKKLSGGIRTALAQYRELAAFSQFASDLDDATRKQLDHGQKVTELLKQKQYAPMSVAQQSLVLFAAERGYLADVELSKIGSFEAALLAYVDRDHAPLMQEINQTGGYNDEIEGKLKGILDSFKATQSW</sequence>
<reference key="1">
    <citation type="submission" date="2008-05" db="EMBL/GenBank/DDBJ databases">
        <title>Complete sequence of Shigella boydii serotype 18 strain BS512.</title>
        <authorList>
            <person name="Rasko D.A."/>
            <person name="Rosovitz M."/>
            <person name="Maurelli A.T."/>
            <person name="Myers G."/>
            <person name="Seshadri R."/>
            <person name="Cer R."/>
            <person name="Jiang L."/>
            <person name="Ravel J."/>
            <person name="Sebastian Y."/>
        </authorList>
    </citation>
    <scope>NUCLEOTIDE SEQUENCE [LARGE SCALE GENOMIC DNA]</scope>
    <source>
        <strain>CDC 3083-94 / BS512</strain>
    </source>
</reference>
<protein>
    <recommendedName>
        <fullName evidence="1">ATP synthase subunit alpha</fullName>
        <ecNumber evidence="1">7.1.2.2</ecNumber>
    </recommendedName>
    <alternativeName>
        <fullName evidence="1">ATP synthase F1 sector subunit alpha</fullName>
    </alternativeName>
    <alternativeName>
        <fullName evidence="1">F-ATPase subunit alpha</fullName>
    </alternativeName>
</protein>
<accession>B2TUP1</accession>
<comment type="function">
    <text evidence="1">Produces ATP from ADP in the presence of a proton gradient across the membrane. The alpha chain is a regulatory subunit.</text>
</comment>
<comment type="catalytic activity">
    <reaction evidence="1">
        <text>ATP + H2O + 4 H(+)(in) = ADP + phosphate + 5 H(+)(out)</text>
        <dbReference type="Rhea" id="RHEA:57720"/>
        <dbReference type="ChEBI" id="CHEBI:15377"/>
        <dbReference type="ChEBI" id="CHEBI:15378"/>
        <dbReference type="ChEBI" id="CHEBI:30616"/>
        <dbReference type="ChEBI" id="CHEBI:43474"/>
        <dbReference type="ChEBI" id="CHEBI:456216"/>
        <dbReference type="EC" id="7.1.2.2"/>
    </reaction>
</comment>
<comment type="subunit">
    <text evidence="1">F-type ATPases have 2 components, CF(1) - the catalytic core - and CF(0) - the membrane proton channel. CF(1) has five subunits: alpha(3), beta(3), gamma(1), delta(1), epsilon(1). CF(0) has three main subunits: a(1), b(2) and c(9-12). The alpha and beta chains form an alternating ring which encloses part of the gamma chain. CF(1) is attached to CF(0) by a central stalk formed by the gamma and epsilon chains, while a peripheral stalk is formed by the delta and b chains.</text>
</comment>
<comment type="subcellular location">
    <subcellularLocation>
        <location evidence="1">Cell inner membrane</location>
        <topology evidence="1">Peripheral membrane protein</topology>
    </subcellularLocation>
</comment>
<comment type="similarity">
    <text evidence="1">Belongs to the ATPase alpha/beta chains family.</text>
</comment>
<dbReference type="EC" id="7.1.2.2" evidence="1"/>
<dbReference type="EMBL" id="CP001063">
    <property type="protein sequence ID" value="ACD07726.1"/>
    <property type="molecule type" value="Genomic_DNA"/>
</dbReference>
<dbReference type="RefSeq" id="WP_001176742.1">
    <property type="nucleotide sequence ID" value="NC_010658.1"/>
</dbReference>
<dbReference type="SMR" id="B2TUP1"/>
<dbReference type="STRING" id="344609.SbBS512_E4187"/>
<dbReference type="KEGG" id="sbc:SbBS512_E4187"/>
<dbReference type="HOGENOM" id="CLU_010091_2_1_6"/>
<dbReference type="Proteomes" id="UP000001030">
    <property type="component" value="Chromosome"/>
</dbReference>
<dbReference type="GO" id="GO:0005886">
    <property type="term" value="C:plasma membrane"/>
    <property type="evidence" value="ECO:0007669"/>
    <property type="project" value="UniProtKB-SubCell"/>
</dbReference>
<dbReference type="GO" id="GO:0045259">
    <property type="term" value="C:proton-transporting ATP synthase complex"/>
    <property type="evidence" value="ECO:0007669"/>
    <property type="project" value="UniProtKB-KW"/>
</dbReference>
<dbReference type="GO" id="GO:0043531">
    <property type="term" value="F:ADP binding"/>
    <property type="evidence" value="ECO:0007669"/>
    <property type="project" value="TreeGrafter"/>
</dbReference>
<dbReference type="GO" id="GO:0005524">
    <property type="term" value="F:ATP binding"/>
    <property type="evidence" value="ECO:0007669"/>
    <property type="project" value="UniProtKB-UniRule"/>
</dbReference>
<dbReference type="GO" id="GO:0046933">
    <property type="term" value="F:proton-transporting ATP synthase activity, rotational mechanism"/>
    <property type="evidence" value="ECO:0007669"/>
    <property type="project" value="UniProtKB-UniRule"/>
</dbReference>
<dbReference type="CDD" id="cd18113">
    <property type="entry name" value="ATP-synt_F1_alpha_C"/>
    <property type="match status" value="1"/>
</dbReference>
<dbReference type="CDD" id="cd18116">
    <property type="entry name" value="ATP-synt_F1_alpha_N"/>
    <property type="match status" value="1"/>
</dbReference>
<dbReference type="CDD" id="cd01132">
    <property type="entry name" value="F1-ATPase_alpha_CD"/>
    <property type="match status" value="1"/>
</dbReference>
<dbReference type="FunFam" id="1.20.150.20:FF:000001">
    <property type="entry name" value="ATP synthase subunit alpha"/>
    <property type="match status" value="1"/>
</dbReference>
<dbReference type="FunFam" id="2.40.30.20:FF:000001">
    <property type="entry name" value="ATP synthase subunit alpha"/>
    <property type="match status" value="1"/>
</dbReference>
<dbReference type="FunFam" id="3.40.50.300:FF:000002">
    <property type="entry name" value="ATP synthase subunit alpha"/>
    <property type="match status" value="1"/>
</dbReference>
<dbReference type="Gene3D" id="2.40.30.20">
    <property type="match status" value="1"/>
</dbReference>
<dbReference type="Gene3D" id="1.20.150.20">
    <property type="entry name" value="ATP synthase alpha/beta chain, C-terminal domain"/>
    <property type="match status" value="1"/>
</dbReference>
<dbReference type="Gene3D" id="3.40.50.300">
    <property type="entry name" value="P-loop containing nucleotide triphosphate hydrolases"/>
    <property type="match status" value="1"/>
</dbReference>
<dbReference type="HAMAP" id="MF_01346">
    <property type="entry name" value="ATP_synth_alpha_bact"/>
    <property type="match status" value="1"/>
</dbReference>
<dbReference type="InterPro" id="IPR023366">
    <property type="entry name" value="ATP_synth_asu-like_sf"/>
</dbReference>
<dbReference type="InterPro" id="IPR000793">
    <property type="entry name" value="ATP_synth_asu_C"/>
</dbReference>
<dbReference type="InterPro" id="IPR038376">
    <property type="entry name" value="ATP_synth_asu_C_sf"/>
</dbReference>
<dbReference type="InterPro" id="IPR033732">
    <property type="entry name" value="ATP_synth_F1_a_nt-bd_dom"/>
</dbReference>
<dbReference type="InterPro" id="IPR005294">
    <property type="entry name" value="ATP_synth_F1_asu"/>
</dbReference>
<dbReference type="InterPro" id="IPR020003">
    <property type="entry name" value="ATPase_a/bsu_AS"/>
</dbReference>
<dbReference type="InterPro" id="IPR004100">
    <property type="entry name" value="ATPase_F1/V1/A1_a/bsu_N"/>
</dbReference>
<dbReference type="InterPro" id="IPR036121">
    <property type="entry name" value="ATPase_F1/V1/A1_a/bsu_N_sf"/>
</dbReference>
<dbReference type="InterPro" id="IPR000194">
    <property type="entry name" value="ATPase_F1/V1/A1_a/bsu_nucl-bd"/>
</dbReference>
<dbReference type="InterPro" id="IPR027417">
    <property type="entry name" value="P-loop_NTPase"/>
</dbReference>
<dbReference type="NCBIfam" id="TIGR00962">
    <property type="entry name" value="atpA"/>
    <property type="match status" value="1"/>
</dbReference>
<dbReference type="NCBIfam" id="NF009884">
    <property type="entry name" value="PRK13343.1"/>
    <property type="match status" value="1"/>
</dbReference>
<dbReference type="PANTHER" id="PTHR48082">
    <property type="entry name" value="ATP SYNTHASE SUBUNIT ALPHA, MITOCHONDRIAL"/>
    <property type="match status" value="1"/>
</dbReference>
<dbReference type="PANTHER" id="PTHR48082:SF2">
    <property type="entry name" value="ATP SYNTHASE SUBUNIT ALPHA, MITOCHONDRIAL"/>
    <property type="match status" value="1"/>
</dbReference>
<dbReference type="Pfam" id="PF00006">
    <property type="entry name" value="ATP-synt_ab"/>
    <property type="match status" value="1"/>
</dbReference>
<dbReference type="Pfam" id="PF00306">
    <property type="entry name" value="ATP-synt_ab_C"/>
    <property type="match status" value="1"/>
</dbReference>
<dbReference type="Pfam" id="PF02874">
    <property type="entry name" value="ATP-synt_ab_N"/>
    <property type="match status" value="1"/>
</dbReference>
<dbReference type="SUPFAM" id="SSF47917">
    <property type="entry name" value="C-terminal domain of alpha and beta subunits of F1 ATP synthase"/>
    <property type="match status" value="1"/>
</dbReference>
<dbReference type="SUPFAM" id="SSF50615">
    <property type="entry name" value="N-terminal domain of alpha and beta subunits of F1 ATP synthase"/>
    <property type="match status" value="1"/>
</dbReference>
<dbReference type="SUPFAM" id="SSF52540">
    <property type="entry name" value="P-loop containing nucleoside triphosphate hydrolases"/>
    <property type="match status" value="1"/>
</dbReference>
<dbReference type="PROSITE" id="PS00152">
    <property type="entry name" value="ATPASE_ALPHA_BETA"/>
    <property type="match status" value="1"/>
</dbReference>
<gene>
    <name evidence="1" type="primary">atpA</name>
    <name type="ordered locus">SbBS512_E4187</name>
</gene>
<organism>
    <name type="scientific">Shigella boydii serotype 18 (strain CDC 3083-94 / BS512)</name>
    <dbReference type="NCBI Taxonomy" id="344609"/>
    <lineage>
        <taxon>Bacteria</taxon>
        <taxon>Pseudomonadati</taxon>
        <taxon>Pseudomonadota</taxon>
        <taxon>Gammaproteobacteria</taxon>
        <taxon>Enterobacterales</taxon>
        <taxon>Enterobacteriaceae</taxon>
        <taxon>Shigella</taxon>
    </lineage>
</organism>
<feature type="chain" id="PRO_1000143438" description="ATP synthase subunit alpha">
    <location>
        <begin position="1"/>
        <end position="513"/>
    </location>
</feature>
<feature type="binding site" evidence="1">
    <location>
        <begin position="169"/>
        <end position="176"/>
    </location>
    <ligand>
        <name>ATP</name>
        <dbReference type="ChEBI" id="CHEBI:30616"/>
    </ligand>
</feature>
<feature type="site" description="Required for activity" evidence="1">
    <location>
        <position position="373"/>
    </location>
</feature>
<name>ATPA_SHIB3</name>
<keyword id="KW-0066">ATP synthesis</keyword>
<keyword id="KW-0067">ATP-binding</keyword>
<keyword id="KW-0997">Cell inner membrane</keyword>
<keyword id="KW-1003">Cell membrane</keyword>
<keyword id="KW-0139">CF(1)</keyword>
<keyword id="KW-0375">Hydrogen ion transport</keyword>
<keyword id="KW-0406">Ion transport</keyword>
<keyword id="KW-0472">Membrane</keyword>
<keyword id="KW-0547">Nucleotide-binding</keyword>
<keyword id="KW-1185">Reference proteome</keyword>
<keyword id="KW-1278">Translocase</keyword>
<keyword id="KW-0813">Transport</keyword>
<evidence type="ECO:0000255" key="1">
    <source>
        <dbReference type="HAMAP-Rule" id="MF_01346"/>
    </source>
</evidence>
<proteinExistence type="inferred from homology"/>